<comment type="function">
    <text evidence="1">Plays an important role in DNA replication, recombination and repair. Binds to ssDNA and to an array of partner proteins to recruit them to their sites of action during DNA metabolism.</text>
</comment>
<comment type="subunit">
    <text evidence="1">Homotetramer.</text>
</comment>
<evidence type="ECO:0000255" key="1">
    <source>
        <dbReference type="HAMAP-Rule" id="MF_00984"/>
    </source>
</evidence>
<evidence type="ECO:0000256" key="2">
    <source>
        <dbReference type="SAM" id="MobiDB-lite"/>
    </source>
</evidence>
<sequence>MASRGINKVILVGNLGNDPEIRYMPNGGAVANITIATSESWRDKATGEQREKTEWHRVVLFGKLAEVAGEYLRKGSQVYVEGQLQTRKWQDQSGQDRYSTEVVVQGFNGVMQMLGGRAQGGAPAMGGQQQQQGGWGQPQQPAQQQYNAPQQQQQAPQQPQQQYNEPPMDFDDDIPF</sequence>
<dbReference type="EMBL" id="BA000031">
    <property type="protein sequence ID" value="BAC60972.1"/>
    <property type="molecule type" value="Genomic_DNA"/>
</dbReference>
<dbReference type="RefSeq" id="NP_799088.1">
    <property type="nucleotide sequence ID" value="NC_004603.1"/>
</dbReference>
<dbReference type="RefSeq" id="WP_005466625.1">
    <property type="nucleotide sequence ID" value="NC_004603.1"/>
</dbReference>
<dbReference type="SMR" id="Q87LA3"/>
<dbReference type="GeneID" id="1190254"/>
<dbReference type="KEGG" id="vpa:VP2709"/>
<dbReference type="PATRIC" id="fig|223926.6.peg.2605"/>
<dbReference type="eggNOG" id="COG0629">
    <property type="taxonomic scope" value="Bacteria"/>
</dbReference>
<dbReference type="HOGENOM" id="CLU_078758_0_2_6"/>
<dbReference type="Proteomes" id="UP000002493">
    <property type="component" value="Chromosome 1"/>
</dbReference>
<dbReference type="GO" id="GO:0009295">
    <property type="term" value="C:nucleoid"/>
    <property type="evidence" value="ECO:0007669"/>
    <property type="project" value="TreeGrafter"/>
</dbReference>
<dbReference type="GO" id="GO:0003697">
    <property type="term" value="F:single-stranded DNA binding"/>
    <property type="evidence" value="ECO:0007669"/>
    <property type="project" value="UniProtKB-UniRule"/>
</dbReference>
<dbReference type="GO" id="GO:0006310">
    <property type="term" value="P:DNA recombination"/>
    <property type="evidence" value="ECO:0007669"/>
    <property type="project" value="UniProtKB-UniRule"/>
</dbReference>
<dbReference type="GO" id="GO:0006281">
    <property type="term" value="P:DNA repair"/>
    <property type="evidence" value="ECO:0007669"/>
    <property type="project" value="UniProtKB-UniRule"/>
</dbReference>
<dbReference type="GO" id="GO:0006260">
    <property type="term" value="P:DNA replication"/>
    <property type="evidence" value="ECO:0007669"/>
    <property type="project" value="UniProtKB-UniRule"/>
</dbReference>
<dbReference type="CDD" id="cd04496">
    <property type="entry name" value="SSB_OBF"/>
    <property type="match status" value="1"/>
</dbReference>
<dbReference type="FunFam" id="2.40.50.140:FF:000065">
    <property type="entry name" value="Single-stranded DNA-binding protein"/>
    <property type="match status" value="1"/>
</dbReference>
<dbReference type="Gene3D" id="2.40.50.140">
    <property type="entry name" value="Nucleic acid-binding proteins"/>
    <property type="match status" value="1"/>
</dbReference>
<dbReference type="HAMAP" id="MF_00984">
    <property type="entry name" value="SSB"/>
    <property type="match status" value="1"/>
</dbReference>
<dbReference type="InterPro" id="IPR012340">
    <property type="entry name" value="NA-bd_OB-fold"/>
</dbReference>
<dbReference type="InterPro" id="IPR000424">
    <property type="entry name" value="Primosome_PriB/ssb"/>
</dbReference>
<dbReference type="InterPro" id="IPR011344">
    <property type="entry name" value="ssDNA-bd"/>
</dbReference>
<dbReference type="NCBIfam" id="NF006533">
    <property type="entry name" value="PRK09010.1"/>
    <property type="match status" value="1"/>
</dbReference>
<dbReference type="NCBIfam" id="TIGR00621">
    <property type="entry name" value="ssb"/>
    <property type="match status" value="1"/>
</dbReference>
<dbReference type="PANTHER" id="PTHR10302">
    <property type="entry name" value="SINGLE-STRANDED DNA-BINDING PROTEIN"/>
    <property type="match status" value="1"/>
</dbReference>
<dbReference type="PANTHER" id="PTHR10302:SF27">
    <property type="entry name" value="SINGLE-STRANDED DNA-BINDING PROTEIN"/>
    <property type="match status" value="1"/>
</dbReference>
<dbReference type="Pfam" id="PF00436">
    <property type="entry name" value="SSB"/>
    <property type="match status" value="1"/>
</dbReference>
<dbReference type="PIRSF" id="PIRSF002070">
    <property type="entry name" value="SSB"/>
    <property type="match status" value="1"/>
</dbReference>
<dbReference type="SUPFAM" id="SSF50249">
    <property type="entry name" value="Nucleic acid-binding proteins"/>
    <property type="match status" value="1"/>
</dbReference>
<dbReference type="PROSITE" id="PS50935">
    <property type="entry name" value="SSB"/>
    <property type="match status" value="1"/>
</dbReference>
<name>SSB_VIBPA</name>
<proteinExistence type="inferred from homology"/>
<reference key="1">
    <citation type="journal article" date="2003" name="Lancet">
        <title>Genome sequence of Vibrio parahaemolyticus: a pathogenic mechanism distinct from that of V. cholerae.</title>
        <authorList>
            <person name="Makino K."/>
            <person name="Oshima K."/>
            <person name="Kurokawa K."/>
            <person name="Yokoyama K."/>
            <person name="Uda T."/>
            <person name="Tagomori K."/>
            <person name="Iijima Y."/>
            <person name="Najima M."/>
            <person name="Nakano M."/>
            <person name="Yamashita A."/>
            <person name="Kubota Y."/>
            <person name="Kimura S."/>
            <person name="Yasunaga T."/>
            <person name="Honda T."/>
            <person name="Shinagawa H."/>
            <person name="Hattori M."/>
            <person name="Iida T."/>
        </authorList>
    </citation>
    <scope>NUCLEOTIDE SEQUENCE [LARGE SCALE GENOMIC DNA]</scope>
    <source>
        <strain>RIMD 2210633</strain>
    </source>
</reference>
<accession>Q87LA3</accession>
<feature type="chain" id="PRO_0000096137" description="Single-stranded DNA-binding protein">
    <location>
        <begin position="1"/>
        <end position="176"/>
    </location>
</feature>
<feature type="domain" description="SSB" evidence="1">
    <location>
        <begin position="6"/>
        <end position="111"/>
    </location>
</feature>
<feature type="DNA-binding region" evidence="1">
    <location>
        <begin position="55"/>
        <end position="61"/>
    </location>
</feature>
<feature type="region of interest" description="Disordered" evidence="2">
    <location>
        <begin position="114"/>
        <end position="176"/>
    </location>
</feature>
<feature type="short sequence motif" description="Important for interaction with partner proteins" evidence="1">
    <location>
        <begin position="171"/>
        <end position="176"/>
    </location>
</feature>
<feature type="compositionally biased region" description="Low complexity" evidence="2">
    <location>
        <begin position="120"/>
        <end position="162"/>
    </location>
</feature>
<protein>
    <recommendedName>
        <fullName evidence="1">Single-stranded DNA-binding protein</fullName>
        <shortName evidence="1">SSB</shortName>
    </recommendedName>
</protein>
<gene>
    <name type="primary">ssb</name>
    <name type="ordered locus">VP2709</name>
</gene>
<organism>
    <name type="scientific">Vibrio parahaemolyticus serotype O3:K6 (strain RIMD 2210633)</name>
    <dbReference type="NCBI Taxonomy" id="223926"/>
    <lineage>
        <taxon>Bacteria</taxon>
        <taxon>Pseudomonadati</taxon>
        <taxon>Pseudomonadota</taxon>
        <taxon>Gammaproteobacteria</taxon>
        <taxon>Vibrionales</taxon>
        <taxon>Vibrionaceae</taxon>
        <taxon>Vibrio</taxon>
    </lineage>
</organism>
<keyword id="KW-0227">DNA damage</keyword>
<keyword id="KW-0233">DNA recombination</keyword>
<keyword id="KW-0234">DNA repair</keyword>
<keyword id="KW-0235">DNA replication</keyword>
<keyword id="KW-0238">DNA-binding</keyword>